<accession>Q0T9E0</accession>
<gene>
    <name evidence="2" type="primary">argI</name>
    <name type="ordered locus">ECP_4498</name>
</gene>
<name>OTC_ECOL5</name>
<comment type="function">
    <text evidence="1">Reversibly catalyzes the transfer of the carbamoyl group from carbamoyl phosphate (CP) to the N(epsilon) atom of ornithine (ORN) to produce L-citrulline.</text>
</comment>
<comment type="catalytic activity">
    <reaction evidence="2">
        <text>carbamoyl phosphate + L-ornithine = L-citrulline + phosphate + H(+)</text>
        <dbReference type="Rhea" id="RHEA:19513"/>
        <dbReference type="ChEBI" id="CHEBI:15378"/>
        <dbReference type="ChEBI" id="CHEBI:43474"/>
        <dbReference type="ChEBI" id="CHEBI:46911"/>
        <dbReference type="ChEBI" id="CHEBI:57743"/>
        <dbReference type="ChEBI" id="CHEBI:58228"/>
        <dbReference type="EC" id="2.1.3.3"/>
    </reaction>
</comment>
<comment type="pathway">
    <text evidence="2">Amino-acid biosynthesis; L-arginine biosynthesis; L-arginine from L-ornithine and carbamoyl phosphate: step 1/3.</text>
</comment>
<comment type="subcellular location">
    <subcellularLocation>
        <location evidence="2">Cytoplasm</location>
    </subcellularLocation>
</comment>
<comment type="similarity">
    <text evidence="2">Belongs to the aspartate/ornithine carbamoyltransferase superfamily. OTCase family.</text>
</comment>
<proteinExistence type="inferred from homology"/>
<reference key="1">
    <citation type="journal article" date="2006" name="Mol. Microbiol.">
        <title>Role of pathogenicity island-associated integrases in the genome plasticity of uropathogenic Escherichia coli strain 536.</title>
        <authorList>
            <person name="Hochhut B."/>
            <person name="Wilde C."/>
            <person name="Balling G."/>
            <person name="Middendorf B."/>
            <person name="Dobrindt U."/>
            <person name="Brzuszkiewicz E."/>
            <person name="Gottschalk G."/>
            <person name="Carniel E."/>
            <person name="Hacker J."/>
        </authorList>
    </citation>
    <scope>NUCLEOTIDE SEQUENCE [LARGE SCALE GENOMIC DNA]</scope>
    <source>
        <strain>536 / UPEC</strain>
    </source>
</reference>
<sequence length="326" mass="36531">MATSLKNRNFLKLLDYTPAEIQYLIDLAINLKAAKKSGNEKQTLVGKNIALIFEKSSTRTRCAFEVAAFDQGAQVTYIGPSGSQIGHKESMKDTARVLGRMYDGIEYRGYGQNIVEELGEFAGVPVWNGLTNEFHPTQILADLMTMLEHAPGKTLPELSFAYLGDARNNMGNSLMVGAAKMGMDIRLVAPKSFWPDEALVTQCREIASVTGARITLTEDVEEGVYDVDFLYTDVWVSMGEPKEAWAERVSLMAPYQINQQVITATRNPEVKFMHCLPAFHNEHTTVGREIEMAYGSKDWKLLKRFLNRPTLLFSMKQKTGCTPLKR</sequence>
<feature type="chain" id="PRO_1000065092" description="Ornithine carbamoyltransferase">
    <location>
        <begin position="1"/>
        <end position="326"/>
    </location>
</feature>
<feature type="binding site" evidence="2">
    <location>
        <begin position="57"/>
        <end position="60"/>
    </location>
    <ligand>
        <name>carbamoyl phosphate</name>
        <dbReference type="ChEBI" id="CHEBI:58228"/>
    </ligand>
</feature>
<feature type="binding site" evidence="2">
    <location>
        <position position="84"/>
    </location>
    <ligand>
        <name>carbamoyl phosphate</name>
        <dbReference type="ChEBI" id="CHEBI:58228"/>
    </ligand>
</feature>
<feature type="binding site" evidence="2">
    <location>
        <position position="108"/>
    </location>
    <ligand>
        <name>carbamoyl phosphate</name>
        <dbReference type="ChEBI" id="CHEBI:58228"/>
    </ligand>
</feature>
<feature type="binding site" evidence="2">
    <location>
        <begin position="135"/>
        <end position="138"/>
    </location>
    <ligand>
        <name>carbamoyl phosphate</name>
        <dbReference type="ChEBI" id="CHEBI:58228"/>
    </ligand>
</feature>
<feature type="binding site" evidence="2">
    <location>
        <position position="169"/>
    </location>
    <ligand>
        <name>L-ornithine</name>
        <dbReference type="ChEBI" id="CHEBI:46911"/>
    </ligand>
</feature>
<feature type="binding site" evidence="2">
    <location>
        <position position="233"/>
    </location>
    <ligand>
        <name>L-ornithine</name>
        <dbReference type="ChEBI" id="CHEBI:46911"/>
    </ligand>
</feature>
<feature type="binding site" evidence="2">
    <location>
        <begin position="237"/>
        <end position="238"/>
    </location>
    <ligand>
        <name>L-ornithine</name>
        <dbReference type="ChEBI" id="CHEBI:46911"/>
    </ligand>
</feature>
<feature type="binding site" evidence="2">
    <location>
        <begin position="275"/>
        <end position="276"/>
    </location>
    <ligand>
        <name>carbamoyl phosphate</name>
        <dbReference type="ChEBI" id="CHEBI:58228"/>
    </ligand>
</feature>
<dbReference type="EC" id="2.1.3.3" evidence="2"/>
<dbReference type="EMBL" id="CP000247">
    <property type="protein sequence ID" value="ABG72439.1"/>
    <property type="molecule type" value="Genomic_DNA"/>
</dbReference>
<dbReference type="SMR" id="Q0T9E0"/>
<dbReference type="KEGG" id="ecp:ECP_4498"/>
<dbReference type="HOGENOM" id="CLU_043846_3_1_6"/>
<dbReference type="UniPathway" id="UPA00068">
    <property type="reaction ID" value="UER00112"/>
</dbReference>
<dbReference type="Proteomes" id="UP000009182">
    <property type="component" value="Chromosome"/>
</dbReference>
<dbReference type="GO" id="GO:0005737">
    <property type="term" value="C:cytoplasm"/>
    <property type="evidence" value="ECO:0007669"/>
    <property type="project" value="UniProtKB-SubCell"/>
</dbReference>
<dbReference type="GO" id="GO:0016597">
    <property type="term" value="F:amino acid binding"/>
    <property type="evidence" value="ECO:0007669"/>
    <property type="project" value="InterPro"/>
</dbReference>
<dbReference type="GO" id="GO:0004585">
    <property type="term" value="F:ornithine carbamoyltransferase activity"/>
    <property type="evidence" value="ECO:0007669"/>
    <property type="project" value="UniProtKB-UniRule"/>
</dbReference>
<dbReference type="GO" id="GO:0042450">
    <property type="term" value="P:arginine biosynthetic process via ornithine"/>
    <property type="evidence" value="ECO:0007669"/>
    <property type="project" value="TreeGrafter"/>
</dbReference>
<dbReference type="GO" id="GO:0019240">
    <property type="term" value="P:citrulline biosynthetic process"/>
    <property type="evidence" value="ECO:0007669"/>
    <property type="project" value="TreeGrafter"/>
</dbReference>
<dbReference type="GO" id="GO:0006526">
    <property type="term" value="P:L-arginine biosynthetic process"/>
    <property type="evidence" value="ECO:0007669"/>
    <property type="project" value="UniProtKB-UniRule"/>
</dbReference>
<dbReference type="FunFam" id="3.40.50.1370:FF:000003">
    <property type="entry name" value="Ornithine carbamoyltransferase"/>
    <property type="match status" value="1"/>
</dbReference>
<dbReference type="Gene3D" id="3.40.50.1370">
    <property type="entry name" value="Aspartate/ornithine carbamoyltransferase"/>
    <property type="match status" value="2"/>
</dbReference>
<dbReference type="HAMAP" id="MF_01109">
    <property type="entry name" value="OTCase"/>
    <property type="match status" value="1"/>
</dbReference>
<dbReference type="InterPro" id="IPR006132">
    <property type="entry name" value="Asp/Orn_carbamoyltranf_P-bd"/>
</dbReference>
<dbReference type="InterPro" id="IPR006130">
    <property type="entry name" value="Asp/Orn_carbamoylTrfase"/>
</dbReference>
<dbReference type="InterPro" id="IPR036901">
    <property type="entry name" value="Asp/Orn_carbamoylTrfase_sf"/>
</dbReference>
<dbReference type="InterPro" id="IPR006131">
    <property type="entry name" value="Asp_carbamoyltransf_Asp/Orn-bd"/>
</dbReference>
<dbReference type="InterPro" id="IPR002292">
    <property type="entry name" value="Orn/put_carbamltrans"/>
</dbReference>
<dbReference type="InterPro" id="IPR024904">
    <property type="entry name" value="OTCase_ArgI"/>
</dbReference>
<dbReference type="NCBIfam" id="TIGR00658">
    <property type="entry name" value="orni_carb_tr"/>
    <property type="match status" value="1"/>
</dbReference>
<dbReference type="PANTHER" id="PTHR45753:SF2">
    <property type="entry name" value="ORNITHINE CARBAMOYLTRANSFERASE"/>
    <property type="match status" value="1"/>
</dbReference>
<dbReference type="PANTHER" id="PTHR45753">
    <property type="entry name" value="ORNITHINE CARBAMOYLTRANSFERASE, MITOCHONDRIAL"/>
    <property type="match status" value="1"/>
</dbReference>
<dbReference type="Pfam" id="PF00185">
    <property type="entry name" value="OTCace"/>
    <property type="match status" value="1"/>
</dbReference>
<dbReference type="Pfam" id="PF02729">
    <property type="entry name" value="OTCace_N"/>
    <property type="match status" value="1"/>
</dbReference>
<dbReference type="PRINTS" id="PR00100">
    <property type="entry name" value="AOTCASE"/>
</dbReference>
<dbReference type="PRINTS" id="PR00102">
    <property type="entry name" value="OTCASE"/>
</dbReference>
<dbReference type="SUPFAM" id="SSF53671">
    <property type="entry name" value="Aspartate/ornithine carbamoyltransferase"/>
    <property type="match status" value="1"/>
</dbReference>
<dbReference type="PROSITE" id="PS00097">
    <property type="entry name" value="CARBAMOYLTRANSFERASE"/>
    <property type="match status" value="1"/>
</dbReference>
<keyword id="KW-0028">Amino-acid biosynthesis</keyword>
<keyword id="KW-0055">Arginine biosynthesis</keyword>
<keyword id="KW-0963">Cytoplasm</keyword>
<keyword id="KW-0808">Transferase</keyword>
<organism>
    <name type="scientific">Escherichia coli O6:K15:H31 (strain 536 / UPEC)</name>
    <dbReference type="NCBI Taxonomy" id="362663"/>
    <lineage>
        <taxon>Bacteria</taxon>
        <taxon>Pseudomonadati</taxon>
        <taxon>Pseudomonadota</taxon>
        <taxon>Gammaproteobacteria</taxon>
        <taxon>Enterobacterales</taxon>
        <taxon>Enterobacteriaceae</taxon>
        <taxon>Escherichia</taxon>
    </lineage>
</organism>
<evidence type="ECO:0000250" key="1"/>
<evidence type="ECO:0000255" key="2">
    <source>
        <dbReference type="HAMAP-Rule" id="MF_01109"/>
    </source>
</evidence>
<protein>
    <recommendedName>
        <fullName evidence="2">Ornithine carbamoyltransferase</fullName>
        <shortName evidence="2">OTCase</shortName>
        <ecNumber evidence="2">2.1.3.3</ecNumber>
    </recommendedName>
</protein>